<gene>
    <name evidence="1" type="primary">recX</name>
    <name type="ordered locus">Mmcs_2148</name>
</gene>
<organism>
    <name type="scientific">Mycobacterium sp. (strain MCS)</name>
    <dbReference type="NCBI Taxonomy" id="164756"/>
    <lineage>
        <taxon>Bacteria</taxon>
        <taxon>Bacillati</taxon>
        <taxon>Actinomycetota</taxon>
        <taxon>Actinomycetes</taxon>
        <taxon>Mycobacteriales</taxon>
        <taxon>Mycobacteriaceae</taxon>
        <taxon>Mycobacterium</taxon>
    </lineage>
</organism>
<dbReference type="EMBL" id="CP000384">
    <property type="protein sequence ID" value="ABG08256.1"/>
    <property type="molecule type" value="Genomic_DNA"/>
</dbReference>
<dbReference type="SMR" id="Q1BA28"/>
<dbReference type="KEGG" id="mmc:Mmcs_2148"/>
<dbReference type="HOGENOM" id="CLU_066607_0_2_11"/>
<dbReference type="BioCyc" id="MSP164756:G1G6O-2195-MONOMER"/>
<dbReference type="GO" id="GO:0005737">
    <property type="term" value="C:cytoplasm"/>
    <property type="evidence" value="ECO:0007669"/>
    <property type="project" value="UniProtKB-SubCell"/>
</dbReference>
<dbReference type="GO" id="GO:0006282">
    <property type="term" value="P:regulation of DNA repair"/>
    <property type="evidence" value="ECO:0007669"/>
    <property type="project" value="UniProtKB-UniRule"/>
</dbReference>
<dbReference type="Gene3D" id="1.10.10.10">
    <property type="entry name" value="Winged helix-like DNA-binding domain superfamily/Winged helix DNA-binding domain"/>
    <property type="match status" value="2"/>
</dbReference>
<dbReference type="HAMAP" id="MF_01114">
    <property type="entry name" value="RecX"/>
    <property type="match status" value="1"/>
</dbReference>
<dbReference type="InterPro" id="IPR053926">
    <property type="entry name" value="RecX_HTH_1st"/>
</dbReference>
<dbReference type="InterPro" id="IPR053924">
    <property type="entry name" value="RecX_HTH_2nd"/>
</dbReference>
<dbReference type="InterPro" id="IPR003783">
    <property type="entry name" value="Regulatory_RecX"/>
</dbReference>
<dbReference type="InterPro" id="IPR036388">
    <property type="entry name" value="WH-like_DNA-bd_sf"/>
</dbReference>
<dbReference type="NCBIfam" id="NF001056">
    <property type="entry name" value="PRK00117.3-1"/>
    <property type="match status" value="1"/>
</dbReference>
<dbReference type="PANTHER" id="PTHR33602">
    <property type="entry name" value="REGULATORY PROTEIN RECX FAMILY PROTEIN"/>
    <property type="match status" value="1"/>
</dbReference>
<dbReference type="PANTHER" id="PTHR33602:SF1">
    <property type="entry name" value="REGULATORY PROTEIN RECX FAMILY PROTEIN"/>
    <property type="match status" value="1"/>
</dbReference>
<dbReference type="Pfam" id="PF21982">
    <property type="entry name" value="RecX_HTH1"/>
    <property type="match status" value="1"/>
</dbReference>
<dbReference type="Pfam" id="PF02631">
    <property type="entry name" value="RecX_HTH2"/>
    <property type="match status" value="1"/>
</dbReference>
<comment type="function">
    <text evidence="1">Modulates RecA activity.</text>
</comment>
<comment type="subcellular location">
    <subcellularLocation>
        <location evidence="1">Cytoplasm</location>
    </subcellularLocation>
</comment>
<comment type="similarity">
    <text evidence="1">Belongs to the RecX family.</text>
</comment>
<sequence length="183" mass="20637">MTSFPHPSTSESGPDPDSEPNREEQAHAYCLRLLTARARTRAELAGKLTQRGYDEPVVARVLDRLVDVGLVDDEDFAEQWVRSRHLYAGKGKRALAAELRRKGVDDEVISSSLADIDAGAERDRAERLVRDRLRREKLDDEPGSDLKVKRRLAGMLARRGYSQSMALDVVTVELAGERERRRV</sequence>
<proteinExistence type="inferred from homology"/>
<reference key="1">
    <citation type="submission" date="2006-06" db="EMBL/GenBank/DDBJ databases">
        <title>Complete sequence of chromosome of Mycobacterium sp. MCS.</title>
        <authorList>
            <consortium name="US DOE Joint Genome Institute"/>
            <person name="Copeland A."/>
            <person name="Lucas S."/>
            <person name="Lapidus A."/>
            <person name="Barry K."/>
            <person name="Detter J.C."/>
            <person name="Glavina del Rio T."/>
            <person name="Hammon N."/>
            <person name="Israni S."/>
            <person name="Dalin E."/>
            <person name="Tice H."/>
            <person name="Pitluck S."/>
            <person name="Martinez M."/>
            <person name="Schmutz J."/>
            <person name="Larimer F."/>
            <person name="Land M."/>
            <person name="Hauser L."/>
            <person name="Kyrpides N."/>
            <person name="Kim E."/>
            <person name="Miller C.D."/>
            <person name="Hughes J.E."/>
            <person name="Anderson A.J."/>
            <person name="Sims R.C."/>
            <person name="Richardson P."/>
        </authorList>
    </citation>
    <scope>NUCLEOTIDE SEQUENCE [LARGE SCALE GENOMIC DNA]</scope>
    <source>
        <strain>MCS</strain>
    </source>
</reference>
<keyword id="KW-0963">Cytoplasm</keyword>
<feature type="chain" id="PRO_1000084985" description="Regulatory protein RecX">
    <location>
        <begin position="1"/>
        <end position="183"/>
    </location>
</feature>
<feature type="region of interest" description="Disordered" evidence="2">
    <location>
        <begin position="1"/>
        <end position="26"/>
    </location>
</feature>
<feature type="compositionally biased region" description="Polar residues" evidence="2">
    <location>
        <begin position="1"/>
        <end position="12"/>
    </location>
</feature>
<accession>Q1BA28</accession>
<name>RECX_MYCSS</name>
<protein>
    <recommendedName>
        <fullName evidence="1">Regulatory protein RecX</fullName>
    </recommendedName>
</protein>
<evidence type="ECO:0000255" key="1">
    <source>
        <dbReference type="HAMAP-Rule" id="MF_01114"/>
    </source>
</evidence>
<evidence type="ECO:0000256" key="2">
    <source>
        <dbReference type="SAM" id="MobiDB-lite"/>
    </source>
</evidence>